<name>THT2_MYCLE</name>
<accession>P46700</accession>
<feature type="chain" id="PRO_0000139417" description="Putative thiosulfate sulfurtransferase SseA">
    <location>
        <begin position="1"/>
        <end position="296"/>
    </location>
</feature>
<feature type="domain" description="Rhodanese 1" evidence="2">
    <location>
        <begin position="31"/>
        <end position="138"/>
    </location>
</feature>
<feature type="domain" description="Rhodanese 2" evidence="2">
    <location>
        <begin position="168"/>
        <end position="286"/>
    </location>
</feature>
<feature type="active site" description="Cysteine persulfide intermediate" evidence="2">
    <location>
        <position position="245"/>
    </location>
</feature>
<feature type="binding site" evidence="1">
    <location>
        <position position="250"/>
    </location>
    <ligand>
        <name>substrate</name>
    </ligand>
</feature>
<dbReference type="EC" id="2.8.1.1"/>
<dbReference type="EMBL" id="U00012">
    <property type="protein sequence ID" value="AAA85919.1"/>
    <property type="molecule type" value="Genomic_DNA"/>
</dbReference>
<dbReference type="EMBL" id="AL583919">
    <property type="protein sequence ID" value="CAC30237.1"/>
    <property type="molecule type" value="Genomic_DNA"/>
</dbReference>
<dbReference type="PIR" id="A87000">
    <property type="entry name" value="A87000"/>
</dbReference>
<dbReference type="RefSeq" id="NP_301568.1">
    <property type="nucleotide sequence ID" value="NC_002677.1"/>
</dbReference>
<dbReference type="RefSeq" id="WP_010907892.1">
    <property type="nucleotide sequence ID" value="NC_002677.1"/>
</dbReference>
<dbReference type="SMR" id="P46700"/>
<dbReference type="STRING" id="272631.gene:17574552"/>
<dbReference type="KEGG" id="mle:ML0728"/>
<dbReference type="PATRIC" id="fig|272631.5.peg.1324"/>
<dbReference type="Leproma" id="ML0728"/>
<dbReference type="eggNOG" id="COG2897">
    <property type="taxonomic scope" value="Bacteria"/>
</dbReference>
<dbReference type="HOGENOM" id="CLU_031618_1_3_11"/>
<dbReference type="OrthoDB" id="9781034at2"/>
<dbReference type="Proteomes" id="UP000000806">
    <property type="component" value="Chromosome"/>
</dbReference>
<dbReference type="GO" id="GO:0004792">
    <property type="term" value="F:thiosulfate-cyanide sulfurtransferase activity"/>
    <property type="evidence" value="ECO:0007669"/>
    <property type="project" value="UniProtKB-EC"/>
</dbReference>
<dbReference type="CDD" id="cd01448">
    <property type="entry name" value="TST_Repeat_1"/>
    <property type="match status" value="1"/>
</dbReference>
<dbReference type="CDD" id="cd01449">
    <property type="entry name" value="TST_Repeat_2"/>
    <property type="match status" value="1"/>
</dbReference>
<dbReference type="Gene3D" id="3.40.250.10">
    <property type="entry name" value="Rhodanese-like domain"/>
    <property type="match status" value="2"/>
</dbReference>
<dbReference type="InterPro" id="IPR001763">
    <property type="entry name" value="Rhodanese-like_dom"/>
</dbReference>
<dbReference type="InterPro" id="IPR036873">
    <property type="entry name" value="Rhodanese-like_dom_sf"/>
</dbReference>
<dbReference type="InterPro" id="IPR051126">
    <property type="entry name" value="Thiosulfate_sulfurtransferase"/>
</dbReference>
<dbReference type="InterPro" id="IPR001307">
    <property type="entry name" value="Thiosulphate_STrfase_CS"/>
</dbReference>
<dbReference type="PANTHER" id="PTHR43855">
    <property type="entry name" value="THIOSULFATE SULFURTRANSFERASE"/>
    <property type="match status" value="1"/>
</dbReference>
<dbReference type="PANTHER" id="PTHR43855:SF1">
    <property type="entry name" value="THIOSULFATE SULFURTRANSFERASE"/>
    <property type="match status" value="1"/>
</dbReference>
<dbReference type="Pfam" id="PF00581">
    <property type="entry name" value="Rhodanese"/>
    <property type="match status" value="2"/>
</dbReference>
<dbReference type="SMART" id="SM00450">
    <property type="entry name" value="RHOD"/>
    <property type="match status" value="2"/>
</dbReference>
<dbReference type="SUPFAM" id="SSF52821">
    <property type="entry name" value="Rhodanese/Cell cycle control phosphatase"/>
    <property type="match status" value="2"/>
</dbReference>
<dbReference type="PROSITE" id="PS00380">
    <property type="entry name" value="RHODANESE_1"/>
    <property type="match status" value="1"/>
</dbReference>
<dbReference type="PROSITE" id="PS00683">
    <property type="entry name" value="RHODANESE_2"/>
    <property type="match status" value="1"/>
</dbReference>
<dbReference type="PROSITE" id="PS50206">
    <property type="entry name" value="RHODANESE_3"/>
    <property type="match status" value="2"/>
</dbReference>
<proteinExistence type="inferred from homology"/>
<organism>
    <name type="scientific">Mycobacterium leprae (strain TN)</name>
    <dbReference type="NCBI Taxonomy" id="272631"/>
    <lineage>
        <taxon>Bacteria</taxon>
        <taxon>Bacillati</taxon>
        <taxon>Actinomycetota</taxon>
        <taxon>Actinomycetes</taxon>
        <taxon>Mycobacteriales</taxon>
        <taxon>Mycobacteriaceae</taxon>
        <taxon>Mycobacterium</taxon>
    </lineage>
</organism>
<protein>
    <recommendedName>
        <fullName>Putative thiosulfate sulfurtransferase SseA</fullName>
        <ecNumber>2.8.1.1</ecNumber>
    </recommendedName>
</protein>
<gene>
    <name type="primary">sseA</name>
    <name type="ordered locus">ML0728</name>
    <name type="ORF">B1308_C1_127</name>
</gene>
<reference key="1">
    <citation type="journal article" date="1995" name="Gene">
        <title>Genomic organization of the mycobacterial sigma gene cluster.</title>
        <authorList>
            <person name="Doukhan L."/>
            <person name="Predich M."/>
            <person name="Nair G."/>
            <person name="Dussurget O."/>
            <person name="Mandic-Mulec I."/>
            <person name="Cole S.T."/>
            <person name="Smith D.R."/>
            <person name="Smith I."/>
        </authorList>
    </citation>
    <scope>NUCLEOTIDE SEQUENCE [GENOMIC DNA]</scope>
</reference>
<reference key="2">
    <citation type="journal article" date="2001" name="Nature">
        <title>Massive gene decay in the leprosy bacillus.</title>
        <authorList>
            <person name="Cole S.T."/>
            <person name="Eiglmeier K."/>
            <person name="Parkhill J."/>
            <person name="James K.D."/>
            <person name="Thomson N.R."/>
            <person name="Wheeler P.R."/>
            <person name="Honore N."/>
            <person name="Garnier T."/>
            <person name="Churcher C.M."/>
            <person name="Harris D.E."/>
            <person name="Mungall K.L."/>
            <person name="Basham D."/>
            <person name="Brown D."/>
            <person name="Chillingworth T."/>
            <person name="Connor R."/>
            <person name="Davies R.M."/>
            <person name="Devlin K."/>
            <person name="Duthoy S."/>
            <person name="Feltwell T."/>
            <person name="Fraser A."/>
            <person name="Hamlin N."/>
            <person name="Holroyd S."/>
            <person name="Hornsby T."/>
            <person name="Jagels K."/>
            <person name="Lacroix C."/>
            <person name="Maclean J."/>
            <person name="Moule S."/>
            <person name="Murphy L.D."/>
            <person name="Oliver K."/>
            <person name="Quail M.A."/>
            <person name="Rajandream M.A."/>
            <person name="Rutherford K.M."/>
            <person name="Rutter S."/>
            <person name="Seeger K."/>
            <person name="Simon S."/>
            <person name="Simmonds M."/>
            <person name="Skelton J."/>
            <person name="Squares R."/>
            <person name="Squares S."/>
            <person name="Stevens K."/>
            <person name="Taylor K."/>
            <person name="Whitehead S."/>
            <person name="Woodward J.R."/>
            <person name="Barrell B.G."/>
        </authorList>
    </citation>
    <scope>NUCLEOTIDE SEQUENCE [LARGE SCALE GENOMIC DNA]</scope>
    <source>
        <strain>TN</strain>
    </source>
</reference>
<keyword id="KW-1185">Reference proteome</keyword>
<keyword id="KW-0677">Repeat</keyword>
<keyword id="KW-0808">Transferase</keyword>
<evidence type="ECO:0000250" key="1"/>
<evidence type="ECO:0000255" key="2">
    <source>
        <dbReference type="PROSITE-ProRule" id="PRU00173"/>
    </source>
</evidence>
<comment type="catalytic activity">
    <reaction>
        <text>thiosulfate + hydrogen cyanide = thiocyanate + sulfite + 2 H(+)</text>
        <dbReference type="Rhea" id="RHEA:16881"/>
        <dbReference type="ChEBI" id="CHEBI:15378"/>
        <dbReference type="ChEBI" id="CHEBI:17359"/>
        <dbReference type="ChEBI" id="CHEBI:18022"/>
        <dbReference type="ChEBI" id="CHEBI:18407"/>
        <dbReference type="ChEBI" id="CHEBI:33542"/>
        <dbReference type="EC" id="2.8.1.1"/>
    </reaction>
</comment>
<comment type="domain">
    <text evidence="1">Contains two rhodanese domains with different primary structures but with near identical secondary structure conformations suggesting a common evolutionary origin. Only the C-terminal rhodanese domain contains the catalytic cysteine residue (By similarity).</text>
</comment>
<sequence>MPLPTDPSPSLSAYAHPERLVTGDWLYFHLGKPGLAIVESDENVLLYDVGHIPGAVKVDWHTDLNDPKVRDYITGEQFADLMNRKGIARDDTVVIYGDKSNWWAAYALWVFTLFGHPDVRLLNGGRDLWLAERRDTSLAVPNKTSTSYPVVNRNDAPIRAFKDDVLAILGTQPLIDVRSLDEYTGKCTEMPDSPEESVLRAGHIPTARSIPWEMTVDKSGRFRSSEELERLYDFITPNDKTIVYCRIGERSSHTWFVLTHLLGKPGVRNYDGSWTEWGNTVRVPITAGESPGAVPV</sequence>